<evidence type="ECO:0000255" key="1">
    <source>
        <dbReference type="HAMAP-Rule" id="MF_00066"/>
    </source>
</evidence>
<protein>
    <recommendedName>
        <fullName evidence="1">Sulfate adenylyltransferase</fullName>
        <ecNumber evidence="1">2.7.7.4</ecNumber>
    </recommendedName>
    <alternativeName>
        <fullName evidence="1">ATP-sulfurylase</fullName>
    </alternativeName>
    <alternativeName>
        <fullName evidence="1">Sulfate adenylate transferase</fullName>
        <shortName evidence="1">SAT</shortName>
    </alternativeName>
</protein>
<accession>B7JGQ4</accession>
<feature type="chain" id="PRO_1000116973" description="Sulfate adenylyltransferase">
    <location>
        <begin position="1"/>
        <end position="378"/>
    </location>
</feature>
<dbReference type="EC" id="2.7.7.4" evidence="1"/>
<dbReference type="EMBL" id="CP001283">
    <property type="protein sequence ID" value="ACK88525.1"/>
    <property type="molecule type" value="Genomic_DNA"/>
</dbReference>
<dbReference type="RefSeq" id="WP_000108773.1">
    <property type="nucleotide sequence ID" value="NC_011773.1"/>
</dbReference>
<dbReference type="SMR" id="B7JGQ4"/>
<dbReference type="KEGG" id="bcu:BCAH820_1513"/>
<dbReference type="HOGENOM" id="CLU_022950_1_1_9"/>
<dbReference type="UniPathway" id="UPA00140">
    <property type="reaction ID" value="UER00204"/>
</dbReference>
<dbReference type="Proteomes" id="UP000001363">
    <property type="component" value="Chromosome"/>
</dbReference>
<dbReference type="GO" id="GO:0005524">
    <property type="term" value="F:ATP binding"/>
    <property type="evidence" value="ECO:0007669"/>
    <property type="project" value="UniProtKB-KW"/>
</dbReference>
<dbReference type="GO" id="GO:0004781">
    <property type="term" value="F:sulfate adenylyltransferase (ATP) activity"/>
    <property type="evidence" value="ECO:0007669"/>
    <property type="project" value="UniProtKB-UniRule"/>
</dbReference>
<dbReference type="GO" id="GO:0070814">
    <property type="term" value="P:hydrogen sulfide biosynthetic process"/>
    <property type="evidence" value="ECO:0007669"/>
    <property type="project" value="UniProtKB-UniRule"/>
</dbReference>
<dbReference type="GO" id="GO:0000103">
    <property type="term" value="P:sulfate assimilation"/>
    <property type="evidence" value="ECO:0007669"/>
    <property type="project" value="UniProtKB-UniRule"/>
</dbReference>
<dbReference type="CDD" id="cd00517">
    <property type="entry name" value="ATPS"/>
    <property type="match status" value="1"/>
</dbReference>
<dbReference type="Gene3D" id="3.40.50.620">
    <property type="entry name" value="HUPs"/>
    <property type="match status" value="1"/>
</dbReference>
<dbReference type="Gene3D" id="3.10.400.10">
    <property type="entry name" value="Sulfate adenylyltransferase"/>
    <property type="match status" value="1"/>
</dbReference>
<dbReference type="HAMAP" id="MF_00066">
    <property type="entry name" value="Sulf_adenylyltr"/>
    <property type="match status" value="1"/>
</dbReference>
<dbReference type="InterPro" id="IPR025980">
    <property type="entry name" value="ATP-Sase_PUA-like_dom"/>
</dbReference>
<dbReference type="InterPro" id="IPR015947">
    <property type="entry name" value="PUA-like_sf"/>
</dbReference>
<dbReference type="InterPro" id="IPR014729">
    <property type="entry name" value="Rossmann-like_a/b/a_fold"/>
</dbReference>
<dbReference type="InterPro" id="IPR020792">
    <property type="entry name" value="SO4_adenylyltransferase_pro"/>
</dbReference>
<dbReference type="InterPro" id="IPR024951">
    <property type="entry name" value="Sulfurylase_cat_dom"/>
</dbReference>
<dbReference type="InterPro" id="IPR002650">
    <property type="entry name" value="Sulphate_adenylyltransferase"/>
</dbReference>
<dbReference type="NCBIfam" id="NF003166">
    <property type="entry name" value="PRK04149.1"/>
    <property type="match status" value="1"/>
</dbReference>
<dbReference type="NCBIfam" id="TIGR00339">
    <property type="entry name" value="sopT"/>
    <property type="match status" value="1"/>
</dbReference>
<dbReference type="PANTHER" id="PTHR43509">
    <property type="match status" value="1"/>
</dbReference>
<dbReference type="PANTHER" id="PTHR43509:SF1">
    <property type="entry name" value="SULFATE ADENYLYLTRANSFERASE"/>
    <property type="match status" value="1"/>
</dbReference>
<dbReference type="Pfam" id="PF01747">
    <property type="entry name" value="ATP-sulfurylase"/>
    <property type="match status" value="1"/>
</dbReference>
<dbReference type="Pfam" id="PF14306">
    <property type="entry name" value="PUA_2"/>
    <property type="match status" value="1"/>
</dbReference>
<dbReference type="SUPFAM" id="SSF52374">
    <property type="entry name" value="Nucleotidylyl transferase"/>
    <property type="match status" value="1"/>
</dbReference>
<dbReference type="SUPFAM" id="SSF88697">
    <property type="entry name" value="PUA domain-like"/>
    <property type="match status" value="1"/>
</dbReference>
<sequence length="378" mass="42550">MSTVNELVNLVDETYDISQIEKEIGLDNIALSDLELLATGGYSPLTGFLGKKDYDSVVETLRLDNGSVWSIPITLPVTEEVAKSLKSGEEVKLVNGGNVYGVIQIEDIFVPDKEKEALLVYKTTDEAHPGVKKLYERPNVYVGGAIVLTKRFENNPFPSYHLDPIETREEFKKRGWKTVVGFQTRNPVHRAHEYIQKSALEIVDGLFLNPLVGETKSDDIPADVRMESYEVLLQNYYPKDRVFLSVFPAAMRYAGPREAIFHALVRKNFGCTHFIVGRDHAGVGDYYGTYEAQEIFTNFTVEELGITPLFFEHSFYCTKCEAMASTKTCPHGKEDHVILSGTKVRELLRNGEIPPSTFSRKEVVEVLIKGLKKEVVTE</sequence>
<name>SAT_BACC0</name>
<comment type="catalytic activity">
    <reaction evidence="1">
        <text>sulfate + ATP + H(+) = adenosine 5'-phosphosulfate + diphosphate</text>
        <dbReference type="Rhea" id="RHEA:18133"/>
        <dbReference type="ChEBI" id="CHEBI:15378"/>
        <dbReference type="ChEBI" id="CHEBI:16189"/>
        <dbReference type="ChEBI" id="CHEBI:30616"/>
        <dbReference type="ChEBI" id="CHEBI:33019"/>
        <dbReference type="ChEBI" id="CHEBI:58243"/>
        <dbReference type="EC" id="2.7.7.4"/>
    </reaction>
</comment>
<comment type="pathway">
    <text evidence="1">Sulfur metabolism; hydrogen sulfide biosynthesis; sulfite from sulfate: step 1/3.</text>
</comment>
<comment type="similarity">
    <text evidence="1">Belongs to the sulfate adenylyltransferase family.</text>
</comment>
<reference key="1">
    <citation type="submission" date="2008-10" db="EMBL/GenBank/DDBJ databases">
        <title>Genome sequence of Bacillus cereus AH820.</title>
        <authorList>
            <person name="Dodson R.J."/>
            <person name="Durkin A.S."/>
            <person name="Rosovitz M.J."/>
            <person name="Rasko D.A."/>
            <person name="Hoffmaster A."/>
            <person name="Ravel J."/>
            <person name="Sutton G."/>
        </authorList>
    </citation>
    <scope>NUCLEOTIDE SEQUENCE [LARGE SCALE GENOMIC DNA]</scope>
    <source>
        <strain>AH820</strain>
    </source>
</reference>
<proteinExistence type="inferred from homology"/>
<gene>
    <name evidence="1" type="primary">sat</name>
    <name type="ordered locus">BCAH820_1513</name>
</gene>
<organism>
    <name type="scientific">Bacillus cereus (strain AH820)</name>
    <dbReference type="NCBI Taxonomy" id="405535"/>
    <lineage>
        <taxon>Bacteria</taxon>
        <taxon>Bacillati</taxon>
        <taxon>Bacillota</taxon>
        <taxon>Bacilli</taxon>
        <taxon>Bacillales</taxon>
        <taxon>Bacillaceae</taxon>
        <taxon>Bacillus</taxon>
        <taxon>Bacillus cereus group</taxon>
    </lineage>
</organism>
<keyword id="KW-0067">ATP-binding</keyword>
<keyword id="KW-0547">Nucleotide-binding</keyword>
<keyword id="KW-0548">Nucleotidyltransferase</keyword>
<keyword id="KW-0808">Transferase</keyword>